<comment type="function">
    <text evidence="1">Involved in the biosynthesis of ADP-glucose, a building block required for the elongation reactions to produce glycogen. Catalyzes the reaction between ATP and alpha-D-glucose 1-phosphate (G1P) to produce pyrophosphate and ADP-Glc.</text>
</comment>
<comment type="catalytic activity">
    <reaction evidence="1">
        <text>alpha-D-glucose 1-phosphate + ATP + H(+) = ADP-alpha-D-glucose + diphosphate</text>
        <dbReference type="Rhea" id="RHEA:12120"/>
        <dbReference type="ChEBI" id="CHEBI:15378"/>
        <dbReference type="ChEBI" id="CHEBI:30616"/>
        <dbReference type="ChEBI" id="CHEBI:33019"/>
        <dbReference type="ChEBI" id="CHEBI:57498"/>
        <dbReference type="ChEBI" id="CHEBI:58601"/>
        <dbReference type="EC" id="2.7.7.27"/>
    </reaction>
</comment>
<comment type="pathway">
    <text evidence="1">Glycan biosynthesis; glycogen biosynthesis.</text>
</comment>
<comment type="subunit">
    <text evidence="1">Homotetramer.</text>
</comment>
<comment type="similarity">
    <text evidence="1">Belongs to the bacterial/plant glucose-1-phosphate adenylyltransferase family.</text>
</comment>
<proteinExistence type="inferred from homology"/>
<keyword id="KW-0067">ATP-binding</keyword>
<keyword id="KW-0119">Carbohydrate metabolism</keyword>
<keyword id="KW-0320">Glycogen biosynthesis</keyword>
<keyword id="KW-0321">Glycogen metabolism</keyword>
<keyword id="KW-0547">Nucleotide-binding</keyword>
<keyword id="KW-0548">Nucleotidyltransferase</keyword>
<keyword id="KW-0808">Transferase</keyword>
<name>GLGC_HYDCU</name>
<reference key="1">
    <citation type="journal article" date="2006" name="PLoS Biol.">
        <title>The genome of deep-sea vent chemolithoautotroph Thiomicrospira crunogena XCL-2.</title>
        <authorList>
            <person name="Scott K.M."/>
            <person name="Sievert S.M."/>
            <person name="Abril F.N."/>
            <person name="Ball L.A."/>
            <person name="Barrett C.J."/>
            <person name="Blake R.A."/>
            <person name="Boller A.J."/>
            <person name="Chain P.S.G."/>
            <person name="Clark J.A."/>
            <person name="Davis C.R."/>
            <person name="Detter C."/>
            <person name="Do K.F."/>
            <person name="Dobrinski K.P."/>
            <person name="Faza B.I."/>
            <person name="Fitzpatrick K.A."/>
            <person name="Freyermuth S.K."/>
            <person name="Harmer T.L."/>
            <person name="Hauser L.J."/>
            <person name="Huegler M."/>
            <person name="Kerfeld C.A."/>
            <person name="Klotz M.G."/>
            <person name="Kong W.W."/>
            <person name="Land M."/>
            <person name="Lapidus A."/>
            <person name="Larimer F.W."/>
            <person name="Longo D.L."/>
            <person name="Lucas S."/>
            <person name="Malfatti S.A."/>
            <person name="Massey S.E."/>
            <person name="Martin D.D."/>
            <person name="McCuddin Z."/>
            <person name="Meyer F."/>
            <person name="Moore J.L."/>
            <person name="Ocampo L.H. Jr."/>
            <person name="Paul J.H."/>
            <person name="Paulsen I.T."/>
            <person name="Reep D.K."/>
            <person name="Ren Q."/>
            <person name="Ross R.L."/>
            <person name="Sato P.Y."/>
            <person name="Thomas P."/>
            <person name="Tinkham L.E."/>
            <person name="Zeruth G.T."/>
        </authorList>
    </citation>
    <scope>NUCLEOTIDE SEQUENCE [LARGE SCALE GENOMIC DNA]</scope>
    <source>
        <strain>DSM 25203 / XCL-2</strain>
    </source>
</reference>
<evidence type="ECO:0000255" key="1">
    <source>
        <dbReference type="HAMAP-Rule" id="MF_00624"/>
    </source>
</evidence>
<sequence length="422" mass="47621">MKYYCETKSATDLTRKTLALVLAGGEGSRLKDLTKWRAKPAVPFGGKYRIIDFVLSNCVNSGIRKIGVLTQYKSHSLIRHVQRAWSFMRYEVGEFVELLPAQQRVDKGWYKGTADALYQNLDIMRRHTPDYVLVLGGDHIYSMDYSKMLYEHAESGADVTIGCIEVPRMEATGFGVMSVDECFKITKFTEKPANPDAMPHKPDKALASMGIYVFSTEFLFQKLIEDADNPNSSRDFGKDIIPSIIEDWQVRAFPFEDETGLPVYWRDVGTIESYWKASLDLCSITPDLNLYDEDWPIWTYQAQMPPAKFIFDDEGRRGEAIDSLVAGGCIISGARIKRSVISSGGHVHSFCLVKDSVLLPRVKVERNCRIQNAVIDKGCVIPEGTVIGEDLEADRKRFYVEEASGIVLVTPDMLGQRLHITR</sequence>
<feature type="chain" id="PRO_0000261906" description="Glucose-1-phosphate adenylyltransferase">
    <location>
        <begin position="1"/>
        <end position="422"/>
    </location>
</feature>
<feature type="binding site" evidence="1">
    <location>
        <position position="110"/>
    </location>
    <ligand>
        <name>alpha-D-glucose 1-phosphate</name>
        <dbReference type="ChEBI" id="CHEBI:58601"/>
    </ligand>
</feature>
<feature type="binding site" evidence="1">
    <location>
        <position position="175"/>
    </location>
    <ligand>
        <name>alpha-D-glucose 1-phosphate</name>
        <dbReference type="ChEBI" id="CHEBI:58601"/>
    </ligand>
</feature>
<feature type="binding site" evidence="1">
    <location>
        <begin position="190"/>
        <end position="191"/>
    </location>
    <ligand>
        <name>alpha-D-glucose 1-phosphate</name>
        <dbReference type="ChEBI" id="CHEBI:58601"/>
    </ligand>
</feature>
<feature type="binding site" evidence="1">
    <location>
        <position position="208"/>
    </location>
    <ligand>
        <name>alpha-D-glucose 1-phosphate</name>
        <dbReference type="ChEBI" id="CHEBI:58601"/>
    </ligand>
</feature>
<accession>Q31IB9</accession>
<gene>
    <name evidence="1" type="primary">glgC</name>
    <name type="ordered locus">Tcr_0508</name>
</gene>
<protein>
    <recommendedName>
        <fullName evidence="1">Glucose-1-phosphate adenylyltransferase</fullName>
        <ecNumber evidence="1">2.7.7.27</ecNumber>
    </recommendedName>
    <alternativeName>
        <fullName evidence="1">ADP-glucose pyrophosphorylase</fullName>
        <shortName evidence="1">ADPGlc PPase</shortName>
    </alternativeName>
    <alternativeName>
        <fullName evidence="1">ADP-glucose synthase</fullName>
    </alternativeName>
</protein>
<organism>
    <name type="scientific">Hydrogenovibrio crunogenus (strain DSM 25203 / XCL-2)</name>
    <name type="common">Thiomicrospira crunogena</name>
    <dbReference type="NCBI Taxonomy" id="317025"/>
    <lineage>
        <taxon>Bacteria</taxon>
        <taxon>Pseudomonadati</taxon>
        <taxon>Pseudomonadota</taxon>
        <taxon>Gammaproteobacteria</taxon>
        <taxon>Thiotrichales</taxon>
        <taxon>Piscirickettsiaceae</taxon>
        <taxon>Hydrogenovibrio</taxon>
    </lineage>
</organism>
<dbReference type="EC" id="2.7.7.27" evidence="1"/>
<dbReference type="EMBL" id="CP000109">
    <property type="protein sequence ID" value="ABB41104.1"/>
    <property type="molecule type" value="Genomic_DNA"/>
</dbReference>
<dbReference type="SMR" id="Q31IB9"/>
<dbReference type="STRING" id="317025.Tcr_0508"/>
<dbReference type="KEGG" id="tcx:Tcr_0508"/>
<dbReference type="eggNOG" id="COG0448">
    <property type="taxonomic scope" value="Bacteria"/>
</dbReference>
<dbReference type="HOGENOM" id="CLU_029499_14_1_6"/>
<dbReference type="OrthoDB" id="9801810at2"/>
<dbReference type="UniPathway" id="UPA00164"/>
<dbReference type="GO" id="GO:0005524">
    <property type="term" value="F:ATP binding"/>
    <property type="evidence" value="ECO:0007669"/>
    <property type="project" value="UniProtKB-KW"/>
</dbReference>
<dbReference type="GO" id="GO:0008878">
    <property type="term" value="F:glucose-1-phosphate adenylyltransferase activity"/>
    <property type="evidence" value="ECO:0007669"/>
    <property type="project" value="UniProtKB-UniRule"/>
</dbReference>
<dbReference type="GO" id="GO:0005978">
    <property type="term" value="P:glycogen biosynthetic process"/>
    <property type="evidence" value="ECO:0007669"/>
    <property type="project" value="UniProtKB-UniRule"/>
</dbReference>
<dbReference type="CDD" id="cd02508">
    <property type="entry name" value="ADP_Glucose_PP"/>
    <property type="match status" value="1"/>
</dbReference>
<dbReference type="CDD" id="cd04651">
    <property type="entry name" value="LbH_G1P_AT_C"/>
    <property type="match status" value="1"/>
</dbReference>
<dbReference type="Gene3D" id="2.160.10.10">
    <property type="entry name" value="Hexapeptide repeat proteins"/>
    <property type="match status" value="1"/>
</dbReference>
<dbReference type="Gene3D" id="3.90.550.10">
    <property type="entry name" value="Spore Coat Polysaccharide Biosynthesis Protein SpsA, Chain A"/>
    <property type="match status" value="1"/>
</dbReference>
<dbReference type="HAMAP" id="MF_00624">
    <property type="entry name" value="GlgC"/>
    <property type="match status" value="1"/>
</dbReference>
<dbReference type="InterPro" id="IPR011831">
    <property type="entry name" value="ADP-Glc_PPase"/>
</dbReference>
<dbReference type="InterPro" id="IPR005836">
    <property type="entry name" value="ADP_Glu_pyroP_CS"/>
</dbReference>
<dbReference type="InterPro" id="IPR023049">
    <property type="entry name" value="GlgC_bac"/>
</dbReference>
<dbReference type="InterPro" id="IPR056818">
    <property type="entry name" value="GlmU/GlgC-like_hexapep"/>
</dbReference>
<dbReference type="InterPro" id="IPR005835">
    <property type="entry name" value="NTP_transferase_dom"/>
</dbReference>
<dbReference type="InterPro" id="IPR029044">
    <property type="entry name" value="Nucleotide-diphossugar_trans"/>
</dbReference>
<dbReference type="InterPro" id="IPR011004">
    <property type="entry name" value="Trimer_LpxA-like_sf"/>
</dbReference>
<dbReference type="NCBIfam" id="TIGR02091">
    <property type="entry name" value="glgC"/>
    <property type="match status" value="1"/>
</dbReference>
<dbReference type="NCBIfam" id="NF001947">
    <property type="entry name" value="PRK00725.1"/>
    <property type="match status" value="1"/>
</dbReference>
<dbReference type="NCBIfam" id="NF002023">
    <property type="entry name" value="PRK00844.1"/>
    <property type="match status" value="1"/>
</dbReference>
<dbReference type="PANTHER" id="PTHR43523:SF2">
    <property type="entry name" value="GLUCOSE-1-PHOSPHATE ADENYLYLTRANSFERASE"/>
    <property type="match status" value="1"/>
</dbReference>
<dbReference type="PANTHER" id="PTHR43523">
    <property type="entry name" value="GLUCOSE-1-PHOSPHATE ADENYLYLTRANSFERASE-RELATED"/>
    <property type="match status" value="1"/>
</dbReference>
<dbReference type="Pfam" id="PF24894">
    <property type="entry name" value="Hexapep_GlmU"/>
    <property type="match status" value="1"/>
</dbReference>
<dbReference type="Pfam" id="PF00483">
    <property type="entry name" value="NTP_transferase"/>
    <property type="match status" value="1"/>
</dbReference>
<dbReference type="SUPFAM" id="SSF53448">
    <property type="entry name" value="Nucleotide-diphospho-sugar transferases"/>
    <property type="match status" value="1"/>
</dbReference>
<dbReference type="SUPFAM" id="SSF51161">
    <property type="entry name" value="Trimeric LpxA-like enzymes"/>
    <property type="match status" value="1"/>
</dbReference>
<dbReference type="PROSITE" id="PS00808">
    <property type="entry name" value="ADP_GLC_PYROPHOSPH_1"/>
    <property type="match status" value="1"/>
</dbReference>
<dbReference type="PROSITE" id="PS00809">
    <property type="entry name" value="ADP_GLC_PYROPHOSPH_2"/>
    <property type="match status" value="1"/>
</dbReference>
<dbReference type="PROSITE" id="PS00810">
    <property type="entry name" value="ADP_GLC_PYROPHOSPH_3"/>
    <property type="match status" value="1"/>
</dbReference>